<organism>
    <name type="scientific">Severe acute respiratory syndrome coronavirus 2</name>
    <name type="common">2019-nCoV</name>
    <name type="synonym">SARS-CoV-2</name>
    <dbReference type="NCBI Taxonomy" id="2697049"/>
    <lineage>
        <taxon>Viruses</taxon>
        <taxon>Riboviria</taxon>
        <taxon>Orthornavirae</taxon>
        <taxon>Pisuviricota</taxon>
        <taxon>Pisoniviricetes</taxon>
        <taxon>Nidovirales</taxon>
        <taxon>Cornidovirineae</taxon>
        <taxon>Coronaviridae</taxon>
        <taxon>Orthocoronavirinae</taxon>
        <taxon>Betacoronavirus</taxon>
        <taxon>Sarbecovirus</taxon>
        <taxon>Severe acute respiratory syndrome coronavirus</taxon>
    </lineage>
</organism>
<protein>
    <recommendedName>
        <fullName>ORF3a protein</fullName>
        <shortName>ORF3a</shortName>
    </recommendedName>
    <alternativeName>
        <fullName>Accessory protein 3a</fullName>
    </alternativeName>
    <alternativeName>
        <fullName>Protein 3a</fullName>
    </alternativeName>
    <alternativeName>
        <fullName>Protein U274</fullName>
    </alternativeName>
    <alternativeName>
        <fullName>Protein X1</fullName>
    </alternativeName>
</protein>
<proteinExistence type="evidence at protein level"/>
<name>AP3A_SARS2</name>
<feature type="chain" id="PRO_0000449650" description="ORF3a protein">
    <location>
        <begin position="1"/>
        <end position="275"/>
    </location>
</feature>
<feature type="topological domain" description="Extracellular" evidence="8">
    <location>
        <begin position="1"/>
        <end position="42"/>
    </location>
</feature>
<feature type="transmembrane region" description="Helical" evidence="8">
    <location>
        <begin position="43"/>
        <end position="61"/>
    </location>
</feature>
<feature type="topological domain" description="Cytoplasmic" evidence="8">
    <location>
        <begin position="62"/>
        <end position="67"/>
    </location>
</feature>
<feature type="transmembrane region" description="Helical" evidence="8">
    <location>
        <begin position="68"/>
        <end position="93"/>
    </location>
</feature>
<feature type="topological domain" description="Extracellular" evidence="8">
    <location>
        <begin position="94"/>
        <end position="101"/>
    </location>
</feature>
<feature type="transmembrane region" description="Helical" evidence="8">
    <location>
        <begin position="102"/>
        <end position="126"/>
    </location>
</feature>
<feature type="topological domain" description="Cytoplasmic" evidence="8">
    <location>
        <begin position="127"/>
        <end position="275"/>
    </location>
</feature>
<feature type="domain" description="CoV 3a-like viroporin TM" evidence="3">
    <location>
        <begin position="33"/>
        <end position="141"/>
    </location>
</feature>
<feature type="domain" description="CoV 3a-like viroporin CD" evidence="4">
    <location>
        <begin position="145"/>
        <end position="237"/>
    </location>
</feature>
<feature type="region of interest" description="Disordered" evidence="11">
    <location>
        <begin position="1"/>
        <end position="39"/>
    </location>
</feature>
<feature type="region of interest" description="Disordered" evidence="11">
    <location>
        <begin position="239"/>
        <end position="275"/>
    </location>
</feature>
<feature type="site" description="Involved in polymerization" evidence="1">
    <location>
        <position position="133"/>
    </location>
</feature>
<feature type="glycosylation site" description="O-linked (GalNAc...) threonine; by host" evidence="1">
    <location>
        <position position="32"/>
    </location>
</feature>
<feature type="glycosylation site" description="O-linked (GalNAc...) threonine; by host" evidence="2">
    <location>
        <position position="34"/>
    </location>
</feature>
<feature type="sequence variant" description="In strain: Delta/B.1.617.2 and Kappa/B.1.617.1." evidence="10">
    <original>S</original>
    <variation>L</variation>
    <location>
        <position position="26"/>
    </location>
</feature>
<feature type="sequence variant" description="In strain: Iota/B.1.526." evidence="10">
    <original>P</original>
    <variation>L</variation>
    <location>
        <position position="42"/>
    </location>
</feature>
<feature type="sequence variant" description="In strain: Beta/B.1.351, Epsilon/B.1.429, Iota/B.1.526 and Mu/B.1.621." evidence="10">
    <original>Q</original>
    <variation>H</variation>
    <location>
        <position position="57"/>
    </location>
</feature>
<feature type="sequence variant" description="In strain: Beta/B.1.351." evidence="10">
    <original>S</original>
    <variation>L</variation>
    <location>
        <position position="171"/>
    </location>
</feature>
<feature type="sequence variant" description="In strain: Omicron/BA.2, Omicron/BA.2.12.1, Omicron/BA.2.75, Omicron/BA.4, Omicron/BA.5, Omicron/BQ.1.1, Omicron/XBB.1.5, Omicron/EG.5.1." evidence="10">
    <original>T</original>
    <variation>I</variation>
    <location>
        <position position="223"/>
    </location>
</feature>
<feature type="sequence variant" description="In strain: Gamma/P.1." evidence="10">
    <original>S</original>
    <variation>P</variation>
    <location>
        <position position="253"/>
    </location>
</feature>
<feature type="sequence variant" description="In strain: Mu/B.1.621." evidence="10">
    <location>
        <position position="257"/>
    </location>
</feature>
<feature type="mutagenesis site" description="Partial loss of Ca(2+) and NMDG(+) permeability. Increased localization at host plasma membrane." evidence="8">
    <location>
        <begin position="1"/>
        <end position="41"/>
    </location>
</feature>
<feature type="mutagenesis site" description="Partial loss of Ca(2+) and NMDG(+) permeability." evidence="8">
    <original>QS</original>
    <variation>EL</variation>
    <location>
        <begin position="57"/>
        <end position="58"/>
    </location>
</feature>
<feature type="mutagenesis site" description="No effect on ion permeability." evidence="8">
    <original>Q</original>
    <variation>H</variation>
    <location>
        <position position="57"/>
    </location>
</feature>
<feature type="mutagenesis site" description="Partial loss of Ca(2+) and NMDG(+) permeability." evidence="8">
    <original>Q</original>
    <variation>L</variation>
    <location>
        <position position="116"/>
    </location>
</feature>
<feature type="helix" evidence="12">
    <location>
        <begin position="44"/>
        <end position="60"/>
    </location>
</feature>
<feature type="helix" evidence="12">
    <location>
        <begin position="68"/>
        <end position="99"/>
    </location>
</feature>
<feature type="helix" evidence="12">
    <location>
        <begin position="103"/>
        <end position="105"/>
    </location>
</feature>
<feature type="helix" evidence="12">
    <location>
        <begin position="106"/>
        <end position="133"/>
    </location>
</feature>
<feature type="helix" evidence="12">
    <location>
        <begin position="137"/>
        <end position="140"/>
    </location>
</feature>
<feature type="strand" evidence="12">
    <location>
        <begin position="144"/>
        <end position="150"/>
    </location>
</feature>
<feature type="strand" evidence="12">
    <location>
        <begin position="155"/>
        <end position="160"/>
    </location>
</feature>
<feature type="strand" evidence="12">
    <location>
        <begin position="165"/>
        <end position="172"/>
    </location>
</feature>
<feature type="strand" evidence="12">
    <location>
        <begin position="183"/>
        <end position="186"/>
    </location>
</feature>
<feature type="strand" evidence="12">
    <location>
        <begin position="189"/>
        <end position="192"/>
    </location>
</feature>
<feature type="strand" evidence="12">
    <location>
        <begin position="199"/>
        <end position="204"/>
    </location>
</feature>
<feature type="strand" evidence="12">
    <location>
        <begin position="209"/>
        <end position="218"/>
    </location>
</feature>
<feature type="helix" evidence="12">
    <location>
        <begin position="220"/>
        <end position="223"/>
    </location>
</feature>
<feature type="strand" evidence="12">
    <location>
        <begin position="228"/>
        <end position="235"/>
    </location>
</feature>
<evidence type="ECO:0000250" key="1">
    <source>
        <dbReference type="UniProtKB" id="P59632"/>
    </source>
</evidence>
<evidence type="ECO:0000255" key="2"/>
<evidence type="ECO:0000255" key="3">
    <source>
        <dbReference type="PROSITE-ProRule" id="PRU01311"/>
    </source>
</evidence>
<evidence type="ECO:0000255" key="4">
    <source>
        <dbReference type="PROSITE-ProRule" id="PRU01312"/>
    </source>
</evidence>
<evidence type="ECO:0000269" key="5">
    <source>
    </source>
</evidence>
<evidence type="ECO:0000269" key="6">
    <source>
    </source>
</evidence>
<evidence type="ECO:0000269" key="7">
    <source>
    </source>
</evidence>
<evidence type="ECO:0000269" key="8">
    <source>
    </source>
</evidence>
<evidence type="ECO:0000269" key="9">
    <source>
    </source>
</evidence>
<evidence type="ECO:0000305" key="10"/>
<evidence type="ECO:0000305" key="11">
    <source>
    </source>
</evidence>
<evidence type="ECO:0007829" key="12">
    <source>
        <dbReference type="PDB" id="7KJR"/>
    </source>
</evidence>
<organismHost>
    <name type="scientific">Homo sapiens</name>
    <name type="common">Human</name>
    <dbReference type="NCBI Taxonomy" id="9606"/>
</organismHost>
<sequence length="275" mass="31123">MDLFMRIFTIGTVTLKQGEIKDATPSDFVRATATIPIQASLPFGWLIVGVALLAVFQSASKIITLKKRWQLALSKGVHFVCNLLLLFVTVYSHLLLVAAGLEAPFLYLYALVYFLQSINFVRIIMRLWLCWKCRSKNPLLYDANYFLCWHTNCYDYCIPYNSVTSSIVITSGDGTTSPISEHDYQIGGYTEKWESGVKDCVVLHSYFTSDYYQLYSTQLSTDTGVEHVTFFIYNKIVDEPEEHVQIHTIDGSSGVVNPVMEPIYDEPTTTTSVPL</sequence>
<reference key="1">
    <citation type="journal article" date="2020" name="Nature">
        <title>A new coronavirus associated with human respiratory disease in China.</title>
        <authorList>
            <person name="Wu F."/>
            <person name="Zhao S."/>
            <person name="Yu B."/>
            <person name="Chen Y.-M."/>
            <person name="Wang W."/>
            <person name="Song Z.-G."/>
            <person name="Hu Y."/>
            <person name="Tao Z.-W."/>
            <person name="Tian J.-H."/>
            <person name="Pei Y.-Y."/>
            <person name="Yuan M.-L."/>
            <person name="Zhang Y.-L."/>
            <person name="Dai F.-H."/>
            <person name="Liu Y."/>
            <person name="Wang Q.-M."/>
            <person name="Zheng J.-J."/>
            <person name="Xu L."/>
            <person name="Holmes E.C."/>
            <person name="Zhang Y.-Z."/>
        </authorList>
    </citation>
    <scope>NUCLEOTIDE SEQUENCE [GENOMIC RNA]</scope>
</reference>
<reference key="2">
    <citation type="journal article" date="2020" name="Science">
        <title>Comparative host-coronavirus protein interaction networks reveal pan-viral disease mechanisms.</title>
        <authorList>
            <consortium name="QCRG Structural Biology Consortium"/>
            <consortium name="Zoonomia Consortium"/>
            <person name="Gordon D.E."/>
            <person name="Hiatt J."/>
            <person name="Bouhaddou M."/>
            <person name="Rezelj V.V."/>
            <person name="Ulferts S."/>
            <person name="Braberg H."/>
            <person name="Jureka A.S."/>
            <person name="Obernier K."/>
            <person name="Guo J.Z."/>
            <person name="Batra J."/>
            <person name="Kaake R.M."/>
            <person name="Weckstein A.R."/>
            <person name="Owens T.W."/>
            <person name="Gupta M."/>
            <person name="Pourmal S."/>
            <person name="Titus E.W."/>
            <person name="Cakir M."/>
            <person name="Soucheray M."/>
            <person name="McGregor M."/>
            <person name="Cakir Z."/>
            <person name="Jang G."/>
            <person name="O'Meara M.J."/>
            <person name="Tummino T.A."/>
            <person name="Zhang Z."/>
            <person name="Foussard H."/>
            <person name="Rojc A."/>
            <person name="Zhou Y."/>
            <person name="Kuchenov D."/>
            <person name="Huettenhain R."/>
            <person name="Xu J."/>
            <person name="Eckhardt M."/>
            <person name="Swaney D.L."/>
            <person name="Fabius J.M."/>
            <person name="Ummadi M."/>
            <person name="Tutuncuoglu B."/>
            <person name="Rathore U."/>
            <person name="Modak M."/>
            <person name="Haas P."/>
            <person name="Haas K.M."/>
            <person name="Naing Z.Z.C."/>
            <person name="Pulido E.H."/>
            <person name="Shi Y."/>
            <person name="Barrio-Hernandez I."/>
            <person name="Memon D."/>
            <person name="Petsalaki E."/>
            <person name="Dunham A."/>
            <person name="Marrero M.C."/>
            <person name="Burke D."/>
            <person name="Koh C."/>
            <person name="Vallet T."/>
            <person name="Silvas J.A."/>
            <person name="Azumaya C.M."/>
            <person name="Billesboelle C."/>
            <person name="Brilot A.F."/>
            <person name="Campbell M.G."/>
            <person name="Diallo A."/>
            <person name="Dickinson M.S."/>
            <person name="Diwanji D."/>
            <person name="Herrera N."/>
            <person name="Hoppe N."/>
            <person name="Kratochvil H.T."/>
            <person name="Liu Y."/>
            <person name="Merz G.E."/>
            <person name="Moritz M."/>
            <person name="Nguyen H.C."/>
            <person name="Nowotny C."/>
            <person name="Puchades C."/>
            <person name="Rizo A.N."/>
            <person name="Schulze-Gahmen U."/>
            <person name="Smith A.M."/>
            <person name="Sun M."/>
            <person name="Young I.D."/>
            <person name="Zhao J."/>
            <person name="Asarnow D."/>
            <person name="Biel J."/>
            <person name="Bowen A."/>
            <person name="Braxton J.R."/>
            <person name="Chen J."/>
            <person name="Chio C.M."/>
            <person name="Chio U.S."/>
            <person name="Deshpande I."/>
            <person name="Doan L."/>
            <person name="Faust B."/>
            <person name="Flores S."/>
            <person name="Jin M."/>
            <person name="Kim K."/>
            <person name="Lam V.L."/>
            <person name="Li F."/>
            <person name="Li J."/>
            <person name="Li Y.L."/>
            <person name="Li Y."/>
            <person name="Liu X."/>
            <person name="Lo M."/>
            <person name="Lopez K.E."/>
            <person name="Melo A.A."/>
            <person name="Moss F.R. III"/>
            <person name="Nguyen P."/>
            <person name="Paulino J."/>
            <person name="Pawar K.I."/>
            <person name="Peters J.K."/>
            <person name="Pospiech T.H. Jr."/>
            <person name="Safari M."/>
            <person name="Sangwan S."/>
            <person name="Schaefer K."/>
            <person name="Thomas P.V."/>
            <person name="Thwin A.C."/>
            <person name="Trenker R."/>
            <person name="Tse E."/>
            <person name="Tsui T.K.M."/>
            <person name="Wang F."/>
            <person name="Whitis N."/>
            <person name="Yu Z."/>
            <person name="Zhang K."/>
            <person name="Zhang Y."/>
            <person name="Zhou F."/>
            <person name="Saltzberg D."/>
            <person name="Hodder A.J."/>
            <person name="Shun-Shion A.S."/>
            <person name="Williams D.M."/>
            <person name="White K.M."/>
            <person name="Rosales R."/>
            <person name="Kehrer T."/>
            <person name="Miorin L."/>
            <person name="Moreno E."/>
            <person name="Patel A.H."/>
            <person name="Rihn S."/>
            <person name="Khalid M.M."/>
            <person name="Vallejo-Gracia A."/>
            <person name="Fozouni P."/>
            <person name="Simoneau C.R."/>
            <person name="Roth T.L."/>
            <person name="Wu D."/>
            <person name="Karim M.A."/>
            <person name="Ghoussaini M."/>
            <person name="Dunham I."/>
            <person name="Berardi F."/>
            <person name="Weigang S."/>
            <person name="Chazal M."/>
            <person name="Park J."/>
            <person name="Logue J."/>
            <person name="McGrath M."/>
            <person name="Weston S."/>
            <person name="Haupt R."/>
            <person name="Hastie C.J."/>
            <person name="Elliott M."/>
            <person name="Brown F."/>
            <person name="Burness K.A."/>
            <person name="Reid E."/>
            <person name="Dorward M."/>
            <person name="Johnson C."/>
            <person name="Wilkinson S.G."/>
            <person name="Geyer A."/>
            <person name="Giesel D.M."/>
            <person name="Baillie C."/>
            <person name="Raggett S."/>
            <person name="Leech H."/>
            <person name="Toth R."/>
            <person name="Goodman N."/>
            <person name="Keough K.C."/>
            <person name="Lind A.L."/>
            <person name="Klesh R.J."/>
            <person name="Hemphill K.R."/>
            <person name="Carlson-Stevermer J."/>
            <person name="Oki J."/>
            <person name="Holden K."/>
            <person name="Maures T."/>
            <person name="Pollard K.S."/>
            <person name="Sali A."/>
            <person name="Agard D.A."/>
            <person name="Cheng Y."/>
            <person name="Fraser J.S."/>
            <person name="Frost A."/>
            <person name="Jura N."/>
            <person name="Kortemme T."/>
            <person name="Manglik A."/>
            <person name="Southworth D.R."/>
            <person name="Stroud R.M."/>
            <person name="Alessi D.R."/>
            <person name="Davies P."/>
            <person name="Frieman M.B."/>
            <person name="Ideker T."/>
            <person name="Abate C."/>
            <person name="Jouvenet N."/>
            <person name="Kochs G."/>
            <person name="Shoichet B."/>
            <person name="Ott M."/>
            <person name="Palmarini M."/>
            <person name="Shokat K.M."/>
            <person name="Garcia-Sastre A."/>
            <person name="Rassen J.A."/>
            <person name="Grosse R."/>
            <person name="Rosenberg O.S."/>
            <person name="Verba K.A."/>
            <person name="Basler C.F."/>
            <person name="Vignuzzi M."/>
            <person name="Peden A.A."/>
            <person name="Beltrao P."/>
            <person name="Krogan N.J."/>
        </authorList>
    </citation>
    <scope>SUBCELLULAR LOCATION</scope>
</reference>
<reference key="3">
    <citation type="journal article" date="2020" name="Cell">
        <title>beta-Coronaviruses Use Lysosomes for Egress Instead of the Biosynthetic Secretory Pathway.</title>
        <authorList>
            <person name="Ghosh S."/>
            <person name="Dellibovi-Ragheb T.A."/>
            <person name="Kerviel A."/>
            <person name="Pak E."/>
            <person name="Qiu Q."/>
            <person name="Fisher M."/>
            <person name="Takvorian P.M."/>
            <person name="Bleck C."/>
            <person name="Hsu V.W."/>
            <person name="Fehr A.R."/>
            <person name="Perlman S."/>
            <person name="Achar S.R."/>
            <person name="Straus M.R."/>
            <person name="Whittaker G.R."/>
            <person name="de Haan C.A.M."/>
            <person name="Kehrl J."/>
            <person name="Altan-Bonnet G."/>
            <person name="Altan-Bonnet N."/>
        </authorList>
    </citation>
    <scope>FUNCTION</scope>
</reference>
<reference key="4">
    <citation type="journal article" date="2020" name="Dev. Cell">
        <title>ORF3a of the COVID-19 virus SARS-CoV-2 blocks HOPS complex-mediated assembly of the SNARE complex required for autolysosome formation.</title>
        <authorList>
            <person name="Miao G."/>
            <person name="Zhao H."/>
            <person name="Li Y."/>
            <person name="Ji M."/>
            <person name="Chen Y."/>
            <person name="Shi Y."/>
            <person name="Bi Y."/>
            <person name="Wang P."/>
            <person name="Zhang H."/>
        </authorList>
    </citation>
    <scope>FUNCTION</scope>
    <scope>INTERACTION WITH HOST VPS39</scope>
    <scope>SUBCELLULAR LOCATION</scope>
</reference>
<reference key="5">
    <citation type="journal article" date="2022" name="Autophagy">
        <title>SARS-CoV-2 ORF3a induces RETREG1/FAM134B-dependent reticulophagy and triggers sequential ER stress and inflammatory responses during SARS-CoV-2 infection.</title>
        <authorList>
            <person name="Zhang X."/>
            <person name="Yang Z."/>
            <person name="Pan T."/>
            <person name="Long X."/>
            <person name="Sun Q."/>
            <person name="Wang P.H."/>
            <person name="Li X."/>
            <person name="Kuang E."/>
        </authorList>
    </citation>
    <scope>FUNCTION</scope>
    <scope>INTERACTION WITH HOST HMGB1 AND HOST HMOX1</scope>
    <scope>SUBCELLULAR LOCATION</scope>
</reference>
<reference key="6">
    <citation type="journal article" date="2022" name="FEBS J.">
        <title>SARS-CoV-2 variants preferentially emerge at intrinsically disordered protein sites helping immune evasion.</title>
        <authorList>
            <person name="Quaglia F."/>
            <person name="Salladini E."/>
            <person name="Carraro M."/>
            <person name="Minervini G."/>
            <person name="Tosatto S.C.E."/>
            <person name="Le Mercier P."/>
        </authorList>
    </citation>
    <scope>DISORDERED REGIONS</scope>
</reference>
<reference key="7">
    <citation type="journal article" date="2021" name="Nat. Struct. Mol. Biol.">
        <title>Cryo-EM structure of SARS-CoV-2 ORF3a in lipid nanodiscs.</title>
        <authorList>
            <person name="Kern D.M."/>
            <person name="Sorum B."/>
            <person name="Mali S.S."/>
            <person name="Hoel C.M."/>
            <person name="Sridharan S."/>
            <person name="Remis J.P."/>
            <person name="Toso D.B."/>
            <person name="Kotecha A."/>
            <person name="Bautista D.M."/>
            <person name="Brohawn S.G."/>
        </authorList>
    </citation>
    <scope>STRUCTURE BY ELECTRON MICROSCOPY (2.1 ANGSTROMS)</scope>
    <scope>FUNCTION</scope>
    <scope>SUBUNIT</scope>
    <scope>MUTAGENESIS OF 1-MET--LEU-41; 57-GLN-SER-58; GLN-57 AND GLN-116</scope>
    <scope>SUBCELLULAR LOCATION</scope>
</reference>
<dbReference type="EMBL" id="MN908947">
    <property type="protein sequence ID" value="QHD43417.1"/>
    <property type="molecule type" value="Genomic_RNA"/>
</dbReference>
<dbReference type="PDB" id="6XDC">
    <property type="method" value="EM"/>
    <property type="resolution" value="2.90 A"/>
    <property type="chains" value="A/B=1-275"/>
</dbReference>
<dbReference type="PDB" id="7KJR">
    <property type="method" value="EM"/>
    <property type="resolution" value="2.08 A"/>
    <property type="chains" value="A/B=1-275"/>
</dbReference>
<dbReference type="PDB" id="8EQJ">
    <property type="method" value="EM"/>
    <property type="resolution" value="3.00 A"/>
    <property type="chains" value="A/B=1-275"/>
</dbReference>
<dbReference type="PDB" id="8EQT">
    <property type="method" value="EM"/>
    <property type="resolution" value="3.40 A"/>
    <property type="chains" value="A/B=1-275"/>
</dbReference>
<dbReference type="PDB" id="8EQU">
    <property type="method" value="EM"/>
    <property type="resolution" value="2.80 A"/>
    <property type="chains" value="A/B=1-275"/>
</dbReference>
<dbReference type="PDB" id="8T5P">
    <property type="method" value="X-ray"/>
    <property type="resolution" value="2.50 A"/>
    <property type="chains" value="G/H/I=36-40"/>
</dbReference>
<dbReference type="PDB" id="8T5Q">
    <property type="method" value="X-ray"/>
    <property type="resolution" value="1.90 A"/>
    <property type="chains" value="G/H/I=36-40"/>
</dbReference>
<dbReference type="PDBsum" id="6XDC"/>
<dbReference type="PDBsum" id="7KJR"/>
<dbReference type="PDBsum" id="8EQJ"/>
<dbReference type="PDBsum" id="8EQT"/>
<dbReference type="PDBsum" id="8EQU"/>
<dbReference type="PDBsum" id="8T5P"/>
<dbReference type="PDBsum" id="8T5Q"/>
<dbReference type="EMDB" id="EMD-22136"/>
<dbReference type="EMDB" id="EMD-22898"/>
<dbReference type="EMDB" id="EMD-28538"/>
<dbReference type="EMDB" id="EMD-28545"/>
<dbReference type="EMDB" id="EMD-28546"/>
<dbReference type="SMR" id="P0DTC3"/>
<dbReference type="BioGRID" id="4383868">
    <property type="interactions" value="1490"/>
</dbReference>
<dbReference type="ComplexPortal" id="CPX-6098">
    <property type="entry name" value="SARS-CoV-2 3a complex"/>
</dbReference>
<dbReference type="FunCoup" id="P0DTC3">
    <property type="interactions" value="316"/>
</dbReference>
<dbReference type="IntAct" id="P0DTC3">
    <property type="interactions" value="468"/>
</dbReference>
<dbReference type="MINT" id="P0DTC3"/>
<dbReference type="TCDB" id="1.A.57.1.5">
    <property type="family name" value="the human sars coronavirus viroporin (sars-vp) family"/>
</dbReference>
<dbReference type="GlyGen" id="P0DTC3">
    <property type="glycosylation" value="2 sites"/>
</dbReference>
<dbReference type="iPTMnet" id="P0DTC3"/>
<dbReference type="DNASU" id="43740569"/>
<dbReference type="AGR" id="RefSeq:YP_009724391"/>
<dbReference type="Reactome" id="R-HSA-9694322">
    <property type="pathway name" value="Virion Assembly and Release"/>
</dbReference>
<dbReference type="Reactome" id="R-HSA-9694614">
    <property type="pathway name" value="Attachment and Entry"/>
</dbReference>
<dbReference type="Reactome" id="R-HSA-9694635">
    <property type="pathway name" value="Translation of Structural Proteins"/>
</dbReference>
<dbReference type="Reactome" id="R-HSA-9694719">
    <property type="pathway name" value="Maturation of protein 3a"/>
</dbReference>
<dbReference type="Reactome" id="R-HSA-9705671">
    <property type="pathway name" value="SARS-CoV-2 activates/modulates innate and adaptive immune responses"/>
</dbReference>
<dbReference type="Reactome" id="R-HSA-9733458">
    <property type="pathway name" value="Induction of Cell-Cell Fusion"/>
</dbReference>
<dbReference type="Reactome" id="R-HSA-9754560">
    <property type="pathway name" value="SARS-CoV-2 modulates autophagy"/>
</dbReference>
<dbReference type="Reactome" id="R-HSA-9755779">
    <property type="pathway name" value="SARS-CoV-2 targets host intracellular signalling and regulatory pathways"/>
</dbReference>
<dbReference type="PRO" id="PR:P0DTC3"/>
<dbReference type="Proteomes" id="UP000464024">
    <property type="component" value="Genome"/>
</dbReference>
<dbReference type="GO" id="GO:0009898">
    <property type="term" value="C:cytoplasmic side of plasma membrane"/>
    <property type="evidence" value="ECO:0000314"/>
    <property type="project" value="DisProt"/>
</dbReference>
<dbReference type="GO" id="GO:0005576">
    <property type="term" value="C:extracellular region"/>
    <property type="evidence" value="ECO:0007669"/>
    <property type="project" value="UniProtKB-SubCell"/>
</dbReference>
<dbReference type="GO" id="GO:0044165">
    <property type="term" value="C:host cell endoplasmic reticulum"/>
    <property type="evidence" value="ECO:0000314"/>
    <property type="project" value="UniProtKB"/>
</dbReference>
<dbReference type="GO" id="GO:0044167">
    <property type="term" value="C:host cell endoplasmic reticulum membrane"/>
    <property type="evidence" value="ECO:0007669"/>
    <property type="project" value="UniProtKB-SubCell"/>
</dbReference>
<dbReference type="GO" id="GO:0044174">
    <property type="term" value="C:host cell endosome"/>
    <property type="evidence" value="ECO:0007669"/>
    <property type="project" value="UniProtKB-SubCell"/>
</dbReference>
<dbReference type="GO" id="GO:0044187">
    <property type="term" value="C:host cell lysosome"/>
    <property type="evidence" value="ECO:0007669"/>
    <property type="project" value="UniProtKB-SubCell"/>
</dbReference>
<dbReference type="GO" id="GO:0020002">
    <property type="term" value="C:host cell plasma membrane"/>
    <property type="evidence" value="ECO:0007669"/>
    <property type="project" value="UniProtKB-SubCell"/>
</dbReference>
<dbReference type="GO" id="GO:0005886">
    <property type="term" value="C:plasma membrane"/>
    <property type="evidence" value="ECO:0000314"/>
    <property type="project" value="ComplexPortal"/>
</dbReference>
<dbReference type="GO" id="GO:0055036">
    <property type="term" value="C:virion membrane"/>
    <property type="evidence" value="ECO:0000304"/>
    <property type="project" value="Reactome"/>
</dbReference>
<dbReference type="GO" id="GO:0005891">
    <property type="term" value="C:voltage-gated calcium channel complex"/>
    <property type="evidence" value="ECO:0000353"/>
    <property type="project" value="ComplexPortal"/>
</dbReference>
<dbReference type="GO" id="GO:0008076">
    <property type="term" value="C:voltage-gated potassium channel complex"/>
    <property type="evidence" value="ECO:0000353"/>
    <property type="project" value="ComplexPortal"/>
</dbReference>
<dbReference type="GO" id="GO:0042802">
    <property type="term" value="F:identical protein binding"/>
    <property type="evidence" value="ECO:0000353"/>
    <property type="project" value="IntAct"/>
</dbReference>
<dbReference type="GO" id="GO:0140677">
    <property type="term" value="F:molecular function activator activity"/>
    <property type="evidence" value="ECO:0000315"/>
    <property type="project" value="DisProt"/>
</dbReference>
<dbReference type="GO" id="GO:0005216">
    <property type="term" value="F:monoatomic ion channel activity"/>
    <property type="evidence" value="ECO:0007669"/>
    <property type="project" value="InterPro"/>
</dbReference>
<dbReference type="GO" id="GO:0098662">
    <property type="term" value="P:inorganic cation transmembrane transport"/>
    <property type="evidence" value="ECO:0000314"/>
    <property type="project" value="ComplexPortal"/>
</dbReference>
<dbReference type="GO" id="GO:0140883">
    <property type="term" value="P:symbiont-mediated activation of host reticulophagy"/>
    <property type="evidence" value="ECO:0000314"/>
    <property type="project" value="UniProtKB"/>
</dbReference>
<dbReference type="CDD" id="cd21648">
    <property type="entry name" value="SARS-CoV-like_ORF3a"/>
    <property type="match status" value="1"/>
</dbReference>
<dbReference type="DisProt" id="DP03003"/>
<dbReference type="InterPro" id="IPR046446">
    <property type="entry name" value="a/bCoV_VIROPORIN_3A-like_CD"/>
</dbReference>
<dbReference type="InterPro" id="IPR046445">
    <property type="entry name" value="a/bCoV_VIROPORIN_3A-like_TM"/>
</dbReference>
<dbReference type="InterPro" id="IPR024407">
    <property type="entry name" value="Protein_3a_bCoV"/>
</dbReference>
<dbReference type="Pfam" id="PF11289">
    <property type="entry name" value="bCoV_viroporin"/>
    <property type="match status" value="1"/>
</dbReference>
<dbReference type="PROSITE" id="PS51967">
    <property type="entry name" value="COV_VIROPORIN_3A_CD"/>
    <property type="match status" value="1"/>
</dbReference>
<dbReference type="PROSITE" id="PS51966">
    <property type="entry name" value="COV_VIROPORIN_3A_TM"/>
    <property type="match status" value="1"/>
</dbReference>
<accession>P0DTC3</accession>
<comment type="function">
    <text evidence="6 7 8 9">Plays a role in viral egress via lysosomal trafficking (PubMed:33157038, PubMed:33422265). Forms homotetrameric ion channels (viroporins) localized at endosomes and lysosomes, that may induce deacidification of lysosomes, allowing safe egress of virions via lysosomal trafficking (PubMed:33157038, PubMed:33422265, PubMed:34158638). Also blocks autolysosome formation by binding and sequestering the host component VPS39 for homotypic fusion and protein sorting (HOPS) on late endosomes (PubMed:33422265). This prevents fusion of autophagosomes with lysosomes, disrupting autophagy and facilitating virus egress (PubMed:33422265). Induces host RETREG1/FAM134B-dependent reticulophagy by interacting with host HMGB1 and enhancing the association between HMGB1 and host BECN1 (PubMed:35239449). This induces endoplasmic reticulum stress and inflammatory responses and facilitates viral infection (PubMed:35239449).</text>
</comment>
<comment type="subunit">
    <text evidence="1 7 8 9">Homodimer (PubMed:34158638), a subset forms homotetramer of two homodimers linked non covalently (PubMed:34158638). Interacts with M, S and E proteins. Also interacts with the accessory protein 7a (By similarity). Interacts with host VPS39, sequestering it on late endosomes (PubMed:33422265). Interacts with host HMGB1; the interaction enhances the association between HMGB1 and host BECN1, promoting reticulophagy (PubMed:35239449). Interacts with HMOX1; the interaction promotes ORF3A-induced autophagy but is unlikely to be involved in ORF3A-mediated induction of reticulophagy (PubMed:35239449).</text>
</comment>
<comment type="interaction">
    <interactant intactId="EBI-25475894">
        <id>P0DTC3</id>
    </interactant>
    <interactant intactId="EBI-25475894">
        <id>P0DTC3</id>
        <label>3a</label>
    </interactant>
    <organismsDiffer>false</organismsDiffer>
    <experiments>4</experiments>
</comment>
<comment type="interaction">
    <interactant intactId="EBI-25475894">
        <id>P0DTC3</id>
    </interactant>
    <interactant intactId="EBI-25475914">
        <id>P0DTD8</id>
        <label>7b</label>
    </interactant>
    <organismsDiffer>false</organismsDiffer>
    <experiments>3</experiments>
</comment>
<comment type="interaction">
    <interactant intactId="EBI-25475894">
        <id>P0DTC3</id>
    </interactant>
    <interactant intactId="EBI-11725055">
        <id>Q9Y673</id>
        <label>ALG5</label>
    </interactant>
    <organismsDiffer>true</organismsDiffer>
    <experiments>4</experiments>
</comment>
<comment type="interaction">
    <interactant intactId="EBI-25475894">
        <id>P0DTC3</id>
    </interactant>
    <interactant intactId="EBI-2808398">
        <id>Q01518</id>
        <label>CAP1</label>
    </interactant>
    <organismsDiffer>true</organismsDiffer>
    <experiments>3</experiments>
</comment>
<comment type="interaction">
    <interactant intactId="EBI-25475894">
        <id>P0DTC3</id>
    </interactant>
    <interactant intactId="EBI-2806151">
        <id>P09601</id>
        <label>HMOX1</label>
    </interactant>
    <organismsDiffer>true</organismsDiffer>
    <experiments>4</experiments>
</comment>
<comment type="interaction">
    <interactant intactId="EBI-25475894">
        <id>P0DTC3</id>
    </interactant>
    <interactant intactId="EBI-744942">
        <id>Q12846</id>
        <label>STX4</label>
    </interactant>
    <organismsDiffer>true</organismsDiffer>
    <experiments>4</experiments>
</comment>
<comment type="interaction">
    <interactant intactId="EBI-25475894">
        <id>P0DTC3</id>
    </interactant>
    <interactant intactId="EBI-723091">
        <id>Q8NBJ7</id>
        <label>SUMF2</label>
    </interactant>
    <organismsDiffer>true</organismsDiffer>
    <experiments>3</experiments>
</comment>
<comment type="interaction">
    <interactant intactId="EBI-25475894">
        <id>P0DTC3</id>
    </interactant>
    <interactant intactId="EBI-1044964">
        <id>Q9UH99</id>
        <label>SUN2</label>
    </interactant>
    <organismsDiffer>true</organismsDiffer>
    <experiments>3</experiments>
</comment>
<comment type="interaction">
    <interactant intactId="EBI-25475894">
        <id>P0DTC3</id>
    </interactant>
    <interactant intactId="EBI-2952704">
        <id>Q9P2Y5</id>
        <label>UVRAG</label>
    </interactant>
    <organismsDiffer>true</organismsDiffer>
    <experiments>6</experiments>
</comment>
<comment type="interaction">
    <interactant intactId="EBI-25475894">
        <id>P0DTC3</id>
    </interactant>
    <interactant intactId="EBI-1052205">
        <id>P51809</id>
        <label>VAMP7</label>
    </interactant>
    <organismsDiffer>true</organismsDiffer>
    <experiments>4</experiments>
</comment>
<comment type="interaction">
    <interactant intactId="EBI-25475894">
        <id>P0DTC3</id>
    </interactant>
    <interactant intactId="EBI-1050197">
        <id>Q96JC1</id>
        <label>VPS39</label>
    </interactant>
    <organismsDiffer>true</organismsDiffer>
    <experiments>19</experiments>
</comment>
<comment type="interaction">
    <interactant intactId="EBI-25475894">
        <id>P0DTC3</id>
    </interactant>
    <interactant intactId="EBI-2130459">
        <id>P49754</id>
        <label>VPS41</label>
    </interactant>
    <organismsDiffer>true</organismsDiffer>
    <experiments>4</experiments>
</comment>
<comment type="interaction">
    <interactant intactId="EBI-25475894">
        <id>P0DTC3</id>
    </interactant>
    <interactant intactId="EBI-6164383">
        <id>Q8NAF0</id>
        <label>ZNF579</label>
    </interactant>
    <organismsDiffer>true</organismsDiffer>
    <experiments>2</experiments>
</comment>
<comment type="subcellular location">
    <subcellularLocation>
        <location evidence="1">Virion</location>
    </subcellularLocation>
    <subcellularLocation>
        <location evidence="1 5 8">Host cell membrane</location>
        <topology evidence="1 8">Multi-pass membrane protein</topology>
    </subcellularLocation>
    <subcellularLocation>
        <location evidence="9">Host endoplasmic reticulum membrane</location>
        <topology evidence="8">Multi-pass membrane protein</topology>
    </subcellularLocation>
    <subcellularLocation>
        <location evidence="1">Secreted</location>
    </subcellularLocation>
    <subcellularLocation>
        <location evidence="1 5">Host cytoplasm</location>
    </subcellularLocation>
    <subcellularLocation>
        <location evidence="5 7">Host endosome</location>
    </subcellularLocation>
    <subcellularLocation>
        <location evidence="7">Host lysosome</location>
    </subcellularLocation>
    <text evidence="1">The cell surface expressed protein can undergo endocytosis. The protein is secreted in association with membranous structures.</text>
</comment>
<comment type="domain">
    <text evidence="1">The second or the third transmembrane region are responsible for Golgi localization.</text>
</comment>
<comment type="PTM">
    <text evidence="1">Exists in both O-glycosylated and non-glycosylated forms. The glycosylated form is associated with the virion.</text>
</comment>
<comment type="polymorphism">
    <text evidence="10">Variant Omicron/BA.1 and BA.2 belong to a lineage first isolated in South Africa (November 2021).</text>
</comment>
<comment type="polymorphism">
    <text evidence="10">Variant Omicron/BQ.1.1 belongs to a lineage first isolated in Nigeria (November 2022).</text>
</comment>
<comment type="polymorphism">
    <text evidence="10">Variant Omicron/XBB.1.5 belongs to a lineage first isolated in United States (November 2022). It is the result of recombination between omicron BJ.1 and BM.1.1. Moreover XBB.1.5 do not express ORF8.</text>
</comment>
<gene>
    <name type="ORF">3a</name>
</gene>
<keyword id="KW-0002">3D-structure</keyword>
<keyword id="KW-1072">Activation of host autophagy by virus</keyword>
<keyword id="KW-0325">Glycoprotein</keyword>
<keyword id="KW-1032">Host cell membrane</keyword>
<keyword id="KW-1035">Host cytoplasm</keyword>
<keyword id="KW-1038">Host endoplasmic reticulum</keyword>
<keyword id="KW-1039">Host endosome</keyword>
<keyword id="KW-1042">Host lysosome</keyword>
<keyword id="KW-1043">Host membrane</keyword>
<keyword id="KW-0945">Host-virus interaction</keyword>
<keyword id="KW-0407">Ion channel</keyword>
<keyword id="KW-0406">Ion transport</keyword>
<keyword id="KW-0472">Membrane</keyword>
<keyword id="KW-1185">Reference proteome</keyword>
<keyword id="KW-0964">Secreted</keyword>
<keyword id="KW-0812">Transmembrane</keyword>
<keyword id="KW-1133">Transmembrane helix</keyword>
<keyword id="KW-0813">Transport</keyword>
<keyword id="KW-1182">Viral ion channel</keyword>
<keyword id="KW-0946">Virion</keyword>